<sequence length="756" mass="82641">MDLRTMTQSLVTLAEDNMAFFSSQGPGETARRLTGVFAGIREQALGLEPALGRLLSVAHLFDLDTETPANGYRSLVHTARCCLAHLLHKSRYVASNRRSIFFRTSHNLAELEAYLAALTQLRALAYYAQRLLTTNQPGRLFFEGDERVIADFLREYVTLHKGCFYGRCLGFQFTPAIRPFLQTISIGLVSFGEHYKRNETGISVTASSLFTDGRFAIDPELRGAEFERIIQNLDVHFWKAFWNITEIQVLSSLANMASTTVRVSRLLSLPPVAFEMPLTSDPELTVTISPPLAHTGPGPVLVRLISYDLREGQDSKELSSFVRSEGPRSLELRLRPQQAPRSRALVVHIHGGGFVAQTSKSHEPYLKSWAQELGAPILSIDYSLAPEAPFPRALEECFYAYCWAVKHCALLGSTGERICLAGDSAGGNLCFTVSLRAAAYGVRVPDGIMAAYPATMLQSTASPSRLLSLMDHLLPLSVLSKCVSTYAGAETEDHPDSDQKALGVMGLVQRDTALLLRDLRLGASSWLNSFLELGGQKSHLKSVSKTEPMRRSVSEAALTQPEGSLGTDSLKSLKLHDLGLRNSSDTTDTPELSLSAETLGPSAPSTINFLLGSEDGSEMSKAPEELNNKDRVRGVGAAFPEGFHPRRCSQGAMWMPLYSAPIVKNPSMSPLLAPDSMLQTLPPVHIVACALDPMLDDSVMFARRLRGLGQPVTLRVAEDLPHGFLSLAALCRETRQAAALCVERIRLILNLPGPPV</sequence>
<accession>P16386</accession>
<accession>A1YWA8</accession>
<accession>Q562H4</accession>
<comment type="function">
    <text evidence="1 2 3">Lipase with broad substrate specificity, catalyzing the hydrolysis of triacylglycerols (TAGs), diacylglycerols (DAGs), monoacylglycerols (MAGs), cholesteryl esters and retinyl esters (By similarity). Shows a preferential hydrolysis of DAGs over TAGs and MAGs (By similarity). Preferentially hydrolyzes fatty acid (FA) esters at the sn-3 position of the glycerol backbone in DAGs and FA esters at the sn-1 and sn-2 positions of the glycerol backbone in TAGs (By similarity). Catalyzes the hydrolysis of 2-arachidonoylglycerol, an endocannabinoid and of 2-acetyl monoalkylglycerol ether, the penultimate precursor of the pathway for de novo synthesis of platelet-activating factor (By similarity). In adipose tissue and heart, it primarily hydrolyzes stored triglycerides to free fatty acids, while in steroidogenic tissues, it principally converts cholesteryl esters to free cholesterol for steroid hormone production (By similarity).</text>
</comment>
<comment type="catalytic activity">
    <reaction evidence="1">
        <text>a diacylglycerol + H2O = a monoacylglycerol + a fatty acid + H(+)</text>
        <dbReference type="Rhea" id="RHEA:32731"/>
        <dbReference type="ChEBI" id="CHEBI:15377"/>
        <dbReference type="ChEBI" id="CHEBI:15378"/>
        <dbReference type="ChEBI" id="CHEBI:17408"/>
        <dbReference type="ChEBI" id="CHEBI:18035"/>
        <dbReference type="ChEBI" id="CHEBI:28868"/>
        <dbReference type="EC" id="3.1.1.79"/>
    </reaction>
</comment>
<comment type="catalytic activity">
    <reaction evidence="1">
        <text>a triacylglycerol + H2O = a diacylglycerol + a fatty acid + H(+)</text>
        <dbReference type="Rhea" id="RHEA:12044"/>
        <dbReference type="ChEBI" id="CHEBI:15377"/>
        <dbReference type="ChEBI" id="CHEBI:15378"/>
        <dbReference type="ChEBI" id="CHEBI:17855"/>
        <dbReference type="ChEBI" id="CHEBI:18035"/>
        <dbReference type="ChEBI" id="CHEBI:28868"/>
        <dbReference type="EC" id="3.1.1.79"/>
    </reaction>
</comment>
<comment type="catalytic activity">
    <reaction evidence="1">
        <text>a monoacylglycerol + H2O = glycerol + a fatty acid + H(+)</text>
        <dbReference type="Rhea" id="RHEA:15245"/>
        <dbReference type="ChEBI" id="CHEBI:15377"/>
        <dbReference type="ChEBI" id="CHEBI:15378"/>
        <dbReference type="ChEBI" id="CHEBI:17408"/>
        <dbReference type="ChEBI" id="CHEBI:17754"/>
        <dbReference type="ChEBI" id="CHEBI:28868"/>
        <dbReference type="EC" id="3.1.1.79"/>
    </reaction>
</comment>
<comment type="catalytic activity">
    <reaction evidence="1">
        <text>Hydrolyzes glycerol monoesters of long-chain fatty acids.</text>
        <dbReference type="EC" id="3.1.1.23"/>
    </reaction>
</comment>
<comment type="catalytic activity">
    <reaction evidence="3">
        <text>1,2-di-(9Z-octadecenoyl)-glycerol + (9Z)-octadecenoate + H(+) = 1,2,3-tri-(9Z-octadecenoyl)-glycerol + H2O</text>
        <dbReference type="Rhea" id="RHEA:38379"/>
        <dbReference type="ChEBI" id="CHEBI:15377"/>
        <dbReference type="ChEBI" id="CHEBI:15378"/>
        <dbReference type="ChEBI" id="CHEBI:30823"/>
        <dbReference type="ChEBI" id="CHEBI:52323"/>
        <dbReference type="ChEBI" id="CHEBI:53753"/>
    </reaction>
    <physiologicalReaction direction="right-to-left" evidence="3">
        <dbReference type="Rhea" id="RHEA:38381"/>
    </physiologicalReaction>
</comment>
<comment type="catalytic activity">
    <reaction evidence="3">
        <text>2,3-di-(9Z)-octadecenoyl-sn-glycerol + H2O = 2-(9Z-octadecenoyl)-glycerol + (9Z)-octadecenoate + H(+)</text>
        <dbReference type="Rhea" id="RHEA:38383"/>
        <dbReference type="ChEBI" id="CHEBI:15377"/>
        <dbReference type="ChEBI" id="CHEBI:15378"/>
        <dbReference type="ChEBI" id="CHEBI:30823"/>
        <dbReference type="ChEBI" id="CHEBI:73990"/>
        <dbReference type="ChEBI" id="CHEBI:75824"/>
    </reaction>
    <physiologicalReaction direction="left-to-right" evidence="3">
        <dbReference type="Rhea" id="RHEA:38384"/>
    </physiologicalReaction>
</comment>
<comment type="catalytic activity">
    <reaction evidence="3">
        <text>cholesteryl (9Z-octadecenoate) + H2O = cholesterol + (9Z)-octadecenoate + H(+)</text>
        <dbReference type="Rhea" id="RHEA:33875"/>
        <dbReference type="ChEBI" id="CHEBI:15377"/>
        <dbReference type="ChEBI" id="CHEBI:15378"/>
        <dbReference type="ChEBI" id="CHEBI:16113"/>
        <dbReference type="ChEBI" id="CHEBI:30823"/>
        <dbReference type="ChEBI" id="CHEBI:46898"/>
    </reaction>
    <physiologicalReaction direction="left-to-right" evidence="3">
        <dbReference type="Rhea" id="RHEA:33876"/>
    </physiologicalReaction>
</comment>
<comment type="catalytic activity">
    <reaction evidence="3">
        <text>1,2,3-tri-(9Z-octadecenoyl)-glycerol + H2O = di-(9Z)-octadecenoylglycerol + (9Z)-octadecenoate + H(+)</text>
        <dbReference type="Rhea" id="RHEA:38575"/>
        <dbReference type="ChEBI" id="CHEBI:15377"/>
        <dbReference type="ChEBI" id="CHEBI:15378"/>
        <dbReference type="ChEBI" id="CHEBI:30823"/>
        <dbReference type="ChEBI" id="CHEBI:53753"/>
        <dbReference type="ChEBI" id="CHEBI:75945"/>
    </reaction>
    <physiologicalReaction direction="left-to-right" evidence="3">
        <dbReference type="Rhea" id="RHEA:38576"/>
    </physiologicalReaction>
</comment>
<comment type="catalytic activity">
    <reaction evidence="2">
        <text>all-trans-retinyl hexadecanoate + H2O = all-trans-retinol + hexadecanoate + H(+)</text>
        <dbReference type="Rhea" id="RHEA:13933"/>
        <dbReference type="ChEBI" id="CHEBI:7896"/>
        <dbReference type="ChEBI" id="CHEBI:15377"/>
        <dbReference type="ChEBI" id="CHEBI:15378"/>
        <dbReference type="ChEBI" id="CHEBI:17336"/>
        <dbReference type="ChEBI" id="CHEBI:17616"/>
    </reaction>
    <physiologicalReaction direction="left-to-right" evidence="2">
        <dbReference type="Rhea" id="RHEA:13934"/>
    </physiologicalReaction>
</comment>
<comment type="catalytic activity">
    <reaction evidence="2">
        <text>1,2-di-(9Z-octadecenoyl)-glycerol + H2O = (9Z-octadecenoyl)-glycerol + (9Z)-octadecenoate + H(+)</text>
        <dbReference type="Rhea" id="RHEA:38455"/>
        <dbReference type="ChEBI" id="CHEBI:15377"/>
        <dbReference type="ChEBI" id="CHEBI:15378"/>
        <dbReference type="ChEBI" id="CHEBI:30823"/>
        <dbReference type="ChEBI" id="CHEBI:52323"/>
        <dbReference type="ChEBI" id="CHEBI:75937"/>
    </reaction>
    <physiologicalReaction direction="left-to-right" evidence="2">
        <dbReference type="Rhea" id="RHEA:38456"/>
    </physiologicalReaction>
</comment>
<comment type="catalytic activity">
    <reaction evidence="2">
        <text>2-(5Z,8Z,11Z,14Z-eicosatetraenoyl)-glycerol + H2O = glycerol + (5Z,8Z,11Z,14Z)-eicosatetraenoate + H(+)</text>
        <dbReference type="Rhea" id="RHEA:26132"/>
        <dbReference type="ChEBI" id="CHEBI:15377"/>
        <dbReference type="ChEBI" id="CHEBI:15378"/>
        <dbReference type="ChEBI" id="CHEBI:17754"/>
        <dbReference type="ChEBI" id="CHEBI:32395"/>
        <dbReference type="ChEBI" id="CHEBI:52392"/>
    </reaction>
    <physiologicalReaction direction="left-to-right" evidence="2">
        <dbReference type="Rhea" id="RHEA:26133"/>
    </physiologicalReaction>
</comment>
<comment type="catalytic activity">
    <reaction evidence="2">
        <text>1-(9Z-octadecenoyl)-glycerol + H2O = glycerol + (9Z)-octadecenoate + H(+)</text>
        <dbReference type="Rhea" id="RHEA:38487"/>
        <dbReference type="ChEBI" id="CHEBI:15377"/>
        <dbReference type="ChEBI" id="CHEBI:15378"/>
        <dbReference type="ChEBI" id="CHEBI:17754"/>
        <dbReference type="ChEBI" id="CHEBI:30823"/>
        <dbReference type="ChEBI" id="CHEBI:75342"/>
    </reaction>
    <physiologicalReaction direction="left-to-right" evidence="2">
        <dbReference type="Rhea" id="RHEA:38488"/>
    </physiologicalReaction>
</comment>
<comment type="catalytic activity">
    <reaction evidence="2">
        <text>2-(9Z-octadecenoyl)-glycerol + H2O = glycerol + (9Z)-octadecenoate + H(+)</text>
        <dbReference type="Rhea" id="RHEA:38491"/>
        <dbReference type="ChEBI" id="CHEBI:15377"/>
        <dbReference type="ChEBI" id="CHEBI:15378"/>
        <dbReference type="ChEBI" id="CHEBI:17754"/>
        <dbReference type="ChEBI" id="CHEBI:30823"/>
        <dbReference type="ChEBI" id="CHEBI:73990"/>
    </reaction>
    <physiologicalReaction direction="left-to-right" evidence="2">
        <dbReference type="Rhea" id="RHEA:38492"/>
    </physiologicalReaction>
</comment>
<comment type="catalytic activity">
    <reaction evidence="2">
        <text>1-O-hexadecyl-2-acetyl-sn-glycerol + H2O = 1-O-hexadecyl-sn-glycerol + acetate + H(+)</text>
        <dbReference type="Rhea" id="RHEA:38563"/>
        <dbReference type="ChEBI" id="CHEBI:15377"/>
        <dbReference type="ChEBI" id="CHEBI:15378"/>
        <dbReference type="ChEBI" id="CHEBI:30089"/>
        <dbReference type="ChEBI" id="CHEBI:34115"/>
        <dbReference type="ChEBI" id="CHEBI:75936"/>
    </reaction>
    <physiologicalReaction direction="left-to-right" evidence="2">
        <dbReference type="Rhea" id="RHEA:38564"/>
    </physiologicalReaction>
</comment>
<comment type="catalytic activity">
    <reaction evidence="2">
        <text>1,2-di-(9Z-octadecenoyl)-sn-glycerol + H2O = (9Z-octadecenoyl)-glycerol + (9Z)-octadecenoate + H(+)</text>
        <dbReference type="Rhea" id="RHEA:39935"/>
        <dbReference type="ChEBI" id="CHEBI:15377"/>
        <dbReference type="ChEBI" id="CHEBI:15378"/>
        <dbReference type="ChEBI" id="CHEBI:30823"/>
        <dbReference type="ChEBI" id="CHEBI:52333"/>
        <dbReference type="ChEBI" id="CHEBI:75937"/>
    </reaction>
    <physiologicalReaction direction="left-to-right" evidence="2">
        <dbReference type="Rhea" id="RHEA:39936"/>
    </physiologicalReaction>
</comment>
<comment type="catalytic activity">
    <reaction evidence="2">
        <text>1,3-di-(9Z-octadecenoyl)-glycerol + H2O = 1-(9Z-octadecenoyl)-glycerol + (9Z)-octadecenoate + H(+)</text>
        <dbReference type="Rhea" id="RHEA:39939"/>
        <dbReference type="ChEBI" id="CHEBI:15377"/>
        <dbReference type="ChEBI" id="CHEBI:15378"/>
        <dbReference type="ChEBI" id="CHEBI:30823"/>
        <dbReference type="ChEBI" id="CHEBI:75342"/>
        <dbReference type="ChEBI" id="CHEBI:75735"/>
    </reaction>
    <physiologicalReaction direction="left-to-right" evidence="2">
        <dbReference type="Rhea" id="RHEA:39940"/>
    </physiologicalReaction>
</comment>
<comment type="catalytic activity">
    <reaction evidence="1">
        <text>1,2-di-(9Z-octadecenoyl)-glycerol + H2O = 2-(9Z-octadecenoyl)-glycerol + (9Z)-octadecenoate + H(+)</text>
        <dbReference type="Rhea" id="RHEA:38659"/>
        <dbReference type="ChEBI" id="CHEBI:15377"/>
        <dbReference type="ChEBI" id="CHEBI:15378"/>
        <dbReference type="ChEBI" id="CHEBI:30823"/>
        <dbReference type="ChEBI" id="CHEBI:52323"/>
        <dbReference type="ChEBI" id="CHEBI:73990"/>
    </reaction>
    <physiologicalReaction direction="left-to-right" evidence="1">
        <dbReference type="Rhea" id="RHEA:38660"/>
    </physiologicalReaction>
</comment>
<comment type="pathway">
    <text>Glycerolipid metabolism; triacylglycerol degradation.</text>
</comment>
<comment type="subunit">
    <text evidence="1 2 3">Monomer and homodimer (By similarity). Interacts with CAVIN1 in the adipocyte cytoplasm (By similarity). Interacts with PLIN5 (By similarity).</text>
</comment>
<comment type="subcellular location">
    <subcellularLocation>
        <location evidence="3">Cell membrane</location>
    </subcellularLocation>
    <subcellularLocation>
        <location evidence="3">Membrane</location>
        <location evidence="3">Caveola</location>
    </subcellularLocation>
    <subcellularLocation>
        <location evidence="3">Cytoplasm</location>
        <location evidence="3">Cytosol</location>
    </subcellularLocation>
    <subcellularLocation>
        <location evidence="2">Lipid droplet</location>
    </subcellularLocation>
    <text evidence="2 3">Found in the high-density caveolae. Translocates to the cytoplasm from the caveolae upon insulin stimulation. Phosphorylation by AMPK reduces its translocation towards the lipid droplets.</text>
</comment>
<comment type="PTM">
    <text evidence="2">Phosphorylation by AMPK reduces its translocation towards the lipid droplets.</text>
</comment>
<comment type="similarity">
    <text evidence="9">Belongs to the 'GDXG' lipolytic enzyme family.</text>
</comment>
<evidence type="ECO:0000250" key="1">
    <source>
        <dbReference type="UniProtKB" id="P15304"/>
    </source>
</evidence>
<evidence type="ECO:0000250" key="2">
    <source>
        <dbReference type="UniProtKB" id="P54310"/>
    </source>
</evidence>
<evidence type="ECO:0000250" key="3">
    <source>
        <dbReference type="UniProtKB" id="Q05469"/>
    </source>
</evidence>
<evidence type="ECO:0000250" key="4">
    <source>
        <dbReference type="UniProtKB" id="Q5NUF3"/>
    </source>
</evidence>
<evidence type="ECO:0000255" key="5">
    <source>
        <dbReference type="PROSITE-ProRule" id="PRU10038"/>
    </source>
</evidence>
<evidence type="ECO:0000256" key="6">
    <source>
        <dbReference type="SAM" id="MobiDB-lite"/>
    </source>
</evidence>
<evidence type="ECO:0000269" key="7">
    <source>
    </source>
</evidence>
<evidence type="ECO:0000269" key="8">
    <source>
    </source>
</evidence>
<evidence type="ECO:0000305" key="9"/>
<proteinExistence type="evidence at protein level"/>
<name>LIPS_BOVIN</name>
<feature type="chain" id="PRO_0000071546" description="Hormone-sensitive lipase">
    <location>
        <begin position="1"/>
        <end position="756"/>
    </location>
</feature>
<feature type="region of interest" description="Disordered" evidence="6">
    <location>
        <begin position="542"/>
        <end position="570"/>
    </location>
</feature>
<feature type="region of interest" description="Disordered" evidence="6">
    <location>
        <begin position="581"/>
        <end position="600"/>
    </location>
</feature>
<feature type="short sequence motif" description="Involved in the stabilization of the negatively charged intermediate by the formation of the oxyanion hole" evidence="4">
    <location>
        <begin position="350"/>
        <end position="352"/>
    </location>
</feature>
<feature type="compositionally biased region" description="Polar residues" evidence="6">
    <location>
        <begin position="581"/>
        <end position="596"/>
    </location>
</feature>
<feature type="active site" evidence="5">
    <location>
        <position position="424"/>
    </location>
</feature>
<feature type="active site" evidence="4">
    <location>
        <position position="692"/>
    </location>
</feature>
<feature type="active site" evidence="4">
    <location>
        <position position="722"/>
    </location>
</feature>
<feature type="modified residue" description="Phosphoserine; by PKA" evidence="8">
    <location>
        <position position="552"/>
    </location>
</feature>
<feature type="modified residue" description="Phosphoserine; by AMPK" evidence="7 8">
    <location>
        <position position="554"/>
    </location>
</feature>
<feature type="modified residue" description="Phosphoserine" evidence="1">
    <location>
        <position position="595"/>
    </location>
</feature>
<feature type="modified residue" description="Phosphoserine" evidence="1">
    <location>
        <position position="649"/>
    </location>
</feature>
<feature type="sequence conflict" description="In Ref. 1; ABL84202." evidence="9" ref="1">
    <original>T</original>
    <variation>S</variation>
    <location>
        <position position="12"/>
    </location>
</feature>
<feature type="sequence conflict" description="In Ref. 1; ABL84202." evidence="9" ref="1">
    <original>L</original>
    <variation>P</variation>
    <location>
        <position position="87"/>
    </location>
</feature>
<feature type="sequence conflict" description="In Ref. 4; AA sequence." evidence="9" ref="4">
    <original>S</original>
    <variation>P</variation>
    <location>
        <position position="564"/>
    </location>
</feature>
<reference key="1">
    <citation type="submission" date="2006-11" db="EMBL/GenBank/DDBJ databases">
        <title>cDNA cloning of bovine LIPE gene.</title>
        <authorList>
            <person name="Guo Y.Q."/>
            <person name="Xu S.Z."/>
            <person name="Gao X."/>
            <person name="Zhang L.P."/>
        </authorList>
    </citation>
    <scope>NUCLEOTIDE SEQUENCE [MRNA]</scope>
</reference>
<reference key="2">
    <citation type="submission" date="2005-03" db="EMBL/GenBank/DDBJ databases">
        <title>HSL Gene Sequence and Phylogenetic Evolution of Bovinae (Bos taurus, Bos grunniens, Bubalus bubalis, and Bos frontalis).</title>
        <authorList>
            <person name="Ma Z.-J."/>
            <person name="Zhong J.-C."/>
            <person name="Guan W.-X."/>
            <person name="Zhao S."/>
            <person name="He K."/>
        </authorList>
    </citation>
    <scope>NUCLEOTIDE SEQUENCE [GENOMIC DNA] OF 4-169</scope>
    <source>
        <tissue>Blood</tissue>
    </source>
</reference>
<reference key="3">
    <citation type="submission" date="2006-05" db="EMBL/GenBank/DDBJ databases">
        <title>Sequencing of hormone-sensitive lipase (LIPE) gene in Korean cattle.</title>
        <authorList>
            <person name="Chung E.R."/>
            <person name="Shin S.C."/>
            <person name="Park J.G."/>
            <person name="Gwon S.Y."/>
        </authorList>
    </citation>
    <scope>NUCLEOTIDE SEQUENCE [GENOMIC DNA] OF 4-169</scope>
    <source>
        <strain>Korean</strain>
    </source>
</reference>
<reference key="4">
    <citation type="journal article" date="1988" name="FEBS Lett.">
        <title>Primary structure of the site on bovine hormone-sensitive lipase phosphorylated by cyclic AMP-dependent protein kinase.</title>
        <authorList>
            <person name="Garton A.J."/>
            <person name="Campbell D.G."/>
            <person name="Cohen P."/>
            <person name="Yeaman S.J."/>
        </authorList>
    </citation>
    <scope>PROTEIN SEQUENCE OF 545-571</scope>
    <scope>PHOSPHORYLATION AT SER-552 AND SER-554</scope>
</reference>
<reference key="5">
    <citation type="journal article" date="1989" name="Eur. J. Biochem.">
        <title>Phosphorylation of bovine hormone-sensitive lipase by the AMP-activated protein kinase. A possible antilipolytic mechanism.</title>
        <authorList>
            <person name="Garton A.J."/>
            <person name="Campbell D.G."/>
            <person name="Carling D."/>
            <person name="Hardie D.G."/>
            <person name="Colbran R.J."/>
            <person name="Yeaman S.J."/>
        </authorList>
    </citation>
    <scope>PROTEIN SEQUENCE OF 552-556</scope>
    <scope>PHOSPHORYLATION AT SER-554</scope>
    <source>
        <tissue>Adipose tissue</tissue>
    </source>
</reference>
<dbReference type="EC" id="3.1.1.79" evidence="1"/>
<dbReference type="EC" id="3.1.1.23" evidence="2"/>
<dbReference type="EMBL" id="EF140760">
    <property type="protein sequence ID" value="ABL84202.1"/>
    <property type="molecule type" value="mRNA"/>
</dbReference>
<dbReference type="EMBL" id="AY986820">
    <property type="protein sequence ID" value="AAX82971.1"/>
    <property type="molecule type" value="Genomic_DNA"/>
</dbReference>
<dbReference type="EMBL" id="DQ523227">
    <property type="protein sequence ID" value="ABG54259.1"/>
    <property type="molecule type" value="Genomic_DNA"/>
</dbReference>
<dbReference type="PIR" id="S00347">
    <property type="entry name" value="S00347"/>
</dbReference>
<dbReference type="RefSeq" id="NP_001073689.1">
    <property type="nucleotide sequence ID" value="NM_001080220.1"/>
</dbReference>
<dbReference type="SMR" id="P16386"/>
<dbReference type="FunCoup" id="P16386">
    <property type="interactions" value="366"/>
</dbReference>
<dbReference type="STRING" id="9913.ENSBTAP00000070134"/>
<dbReference type="ESTHER" id="bovin-hslip">
    <property type="family name" value="Hormone-sensitive_lipase_like"/>
</dbReference>
<dbReference type="iPTMnet" id="P16386"/>
<dbReference type="PaxDb" id="9913-ENSBTAP00000041426"/>
<dbReference type="GeneID" id="286879"/>
<dbReference type="KEGG" id="bta:286879"/>
<dbReference type="CTD" id="3991"/>
<dbReference type="eggNOG" id="KOG4388">
    <property type="taxonomic scope" value="Eukaryota"/>
</dbReference>
<dbReference type="InParanoid" id="P16386"/>
<dbReference type="OrthoDB" id="408631at2759"/>
<dbReference type="BRENDA" id="3.1.1.79">
    <property type="organism ID" value="908"/>
</dbReference>
<dbReference type="UniPathway" id="UPA00256"/>
<dbReference type="Proteomes" id="UP000009136">
    <property type="component" value="Unplaced"/>
</dbReference>
<dbReference type="GO" id="GO:0005901">
    <property type="term" value="C:caveola"/>
    <property type="evidence" value="ECO:0000250"/>
    <property type="project" value="UniProtKB"/>
</dbReference>
<dbReference type="GO" id="GO:0005737">
    <property type="term" value="C:cytoplasm"/>
    <property type="evidence" value="ECO:0000250"/>
    <property type="project" value="UniProtKB"/>
</dbReference>
<dbReference type="GO" id="GO:0005829">
    <property type="term" value="C:cytosol"/>
    <property type="evidence" value="ECO:0000250"/>
    <property type="project" value="UniProtKB"/>
</dbReference>
<dbReference type="GO" id="GO:0005811">
    <property type="term" value="C:lipid droplet"/>
    <property type="evidence" value="ECO:0000250"/>
    <property type="project" value="UniProtKB"/>
</dbReference>
<dbReference type="GO" id="GO:0016020">
    <property type="term" value="C:membrane"/>
    <property type="evidence" value="ECO:0000250"/>
    <property type="project" value="UniProtKB"/>
</dbReference>
<dbReference type="GO" id="GO:0005739">
    <property type="term" value="C:mitochondrion"/>
    <property type="evidence" value="ECO:0000250"/>
    <property type="project" value="UniProtKB"/>
</dbReference>
<dbReference type="GO" id="GO:0005634">
    <property type="term" value="C:nucleus"/>
    <property type="evidence" value="ECO:0000250"/>
    <property type="project" value="UniProtKB"/>
</dbReference>
<dbReference type="GO" id="GO:0047376">
    <property type="term" value="F:all-trans-retinyl-palmitate hydrolase, all-trans-retinol forming activity"/>
    <property type="evidence" value="ECO:0007669"/>
    <property type="project" value="RHEA"/>
</dbReference>
<dbReference type="GO" id="GO:0120516">
    <property type="term" value="F:diacylglycerol lipase activity"/>
    <property type="evidence" value="ECO:0000250"/>
    <property type="project" value="UniProtKB"/>
</dbReference>
<dbReference type="GO" id="GO:0047372">
    <property type="term" value="F:monoacylglycerol lipase activity"/>
    <property type="evidence" value="ECO:0000250"/>
    <property type="project" value="UniProtKB"/>
</dbReference>
<dbReference type="GO" id="GO:0050253">
    <property type="term" value="F:retinyl-palmitate esterase activity"/>
    <property type="evidence" value="ECO:0000250"/>
    <property type="project" value="UniProtKB"/>
</dbReference>
<dbReference type="GO" id="GO:0042134">
    <property type="term" value="F:rRNA primary transcript binding"/>
    <property type="evidence" value="ECO:0000250"/>
    <property type="project" value="UniProtKB"/>
</dbReference>
<dbReference type="GO" id="GO:0004771">
    <property type="term" value="F:sterol ester esterase activity"/>
    <property type="evidence" value="ECO:0000250"/>
    <property type="project" value="UniProtKB"/>
</dbReference>
<dbReference type="GO" id="GO:0004806">
    <property type="term" value="F:triacylglycerol lipase activity"/>
    <property type="evidence" value="ECO:0000250"/>
    <property type="project" value="UniProtKB"/>
</dbReference>
<dbReference type="GO" id="GO:0008203">
    <property type="term" value="P:cholesterol metabolic process"/>
    <property type="evidence" value="ECO:0007669"/>
    <property type="project" value="UniProtKB-KW"/>
</dbReference>
<dbReference type="GO" id="GO:0046340">
    <property type="term" value="P:diacylglycerol catabolic process"/>
    <property type="evidence" value="ECO:0000250"/>
    <property type="project" value="UniProtKB"/>
</dbReference>
<dbReference type="GO" id="GO:0046485">
    <property type="term" value="P:ether lipid metabolic process"/>
    <property type="evidence" value="ECO:0000250"/>
    <property type="project" value="UniProtKB"/>
</dbReference>
<dbReference type="GO" id="GO:0016042">
    <property type="term" value="P:lipid catabolic process"/>
    <property type="evidence" value="ECO:0000250"/>
    <property type="project" value="UniProtKB"/>
</dbReference>
<dbReference type="GO" id="GO:0006363">
    <property type="term" value="P:termination of RNA polymerase I transcription"/>
    <property type="evidence" value="ECO:0000250"/>
    <property type="project" value="UniProtKB"/>
</dbReference>
<dbReference type="GO" id="GO:0006361">
    <property type="term" value="P:transcription initiation at RNA polymerase I promoter"/>
    <property type="evidence" value="ECO:0000250"/>
    <property type="project" value="UniProtKB"/>
</dbReference>
<dbReference type="GO" id="GO:0019433">
    <property type="term" value="P:triglyceride catabolic process"/>
    <property type="evidence" value="ECO:0000318"/>
    <property type="project" value="GO_Central"/>
</dbReference>
<dbReference type="FunFam" id="3.40.50.1820:FF:000110">
    <property type="entry name" value="Hormone-sensitive lipase"/>
    <property type="match status" value="1"/>
</dbReference>
<dbReference type="FunFam" id="3.40.50.1820:FF:000199">
    <property type="entry name" value="Hormone-sensitive lipase"/>
    <property type="match status" value="1"/>
</dbReference>
<dbReference type="Gene3D" id="3.40.50.1820">
    <property type="entry name" value="alpha/beta hydrolase"/>
    <property type="match status" value="2"/>
</dbReference>
<dbReference type="InterPro" id="IPR013094">
    <property type="entry name" value="AB_hydrolase_3"/>
</dbReference>
<dbReference type="InterPro" id="IPR029058">
    <property type="entry name" value="AB_hydrolase_fold"/>
</dbReference>
<dbReference type="InterPro" id="IPR010468">
    <property type="entry name" value="HSL_N"/>
</dbReference>
<dbReference type="InterPro" id="IPR002168">
    <property type="entry name" value="Lipase_GDXG_HIS_AS"/>
</dbReference>
<dbReference type="InterPro" id="IPR033140">
    <property type="entry name" value="Lipase_GDXG_put_SER_AS"/>
</dbReference>
<dbReference type="PANTHER" id="PTHR23025:SF3">
    <property type="entry name" value="HORMONE-SENSITIVE LIPASE"/>
    <property type="match status" value="1"/>
</dbReference>
<dbReference type="PANTHER" id="PTHR23025">
    <property type="entry name" value="TRIACYLGLYCEROL LIPASE"/>
    <property type="match status" value="1"/>
</dbReference>
<dbReference type="Pfam" id="PF07859">
    <property type="entry name" value="Abhydrolase_3"/>
    <property type="match status" value="2"/>
</dbReference>
<dbReference type="Pfam" id="PF06350">
    <property type="entry name" value="HSL_N"/>
    <property type="match status" value="1"/>
</dbReference>
<dbReference type="SUPFAM" id="SSF53474">
    <property type="entry name" value="alpha/beta-Hydrolases"/>
    <property type="match status" value="1"/>
</dbReference>
<dbReference type="PROSITE" id="PS01173">
    <property type="entry name" value="LIPASE_GDXG_HIS"/>
    <property type="match status" value="1"/>
</dbReference>
<dbReference type="PROSITE" id="PS01174">
    <property type="entry name" value="LIPASE_GDXG_SER"/>
    <property type="match status" value="1"/>
</dbReference>
<keyword id="KW-1003">Cell membrane</keyword>
<keyword id="KW-0153">Cholesterol metabolism</keyword>
<keyword id="KW-0963">Cytoplasm</keyword>
<keyword id="KW-0903">Direct protein sequencing</keyword>
<keyword id="KW-0378">Hydrolase</keyword>
<keyword id="KW-0442">Lipid degradation</keyword>
<keyword id="KW-0551">Lipid droplet</keyword>
<keyword id="KW-0443">Lipid metabolism</keyword>
<keyword id="KW-0472">Membrane</keyword>
<keyword id="KW-0597">Phosphoprotein</keyword>
<keyword id="KW-1185">Reference proteome</keyword>
<keyword id="KW-0753">Steroid metabolism</keyword>
<keyword id="KW-1207">Sterol metabolism</keyword>
<protein>
    <recommendedName>
        <fullName>Hormone-sensitive lipase</fullName>
        <shortName>HSL</shortName>
        <ecNumber evidence="1">3.1.1.79</ecNumber>
    </recommendedName>
    <alternativeName>
        <fullName>Monoacylglycerol lipase LIPE</fullName>
        <ecNumber evidence="2">3.1.1.23</ecNumber>
    </alternativeName>
    <alternativeName>
        <fullName evidence="2">Retinyl ester hydrolase</fullName>
        <shortName>REH</shortName>
    </alternativeName>
</protein>
<gene>
    <name type="primary">LIPE</name>
</gene>
<organism>
    <name type="scientific">Bos taurus</name>
    <name type="common">Bovine</name>
    <dbReference type="NCBI Taxonomy" id="9913"/>
    <lineage>
        <taxon>Eukaryota</taxon>
        <taxon>Metazoa</taxon>
        <taxon>Chordata</taxon>
        <taxon>Craniata</taxon>
        <taxon>Vertebrata</taxon>
        <taxon>Euteleostomi</taxon>
        <taxon>Mammalia</taxon>
        <taxon>Eutheria</taxon>
        <taxon>Laurasiatheria</taxon>
        <taxon>Artiodactyla</taxon>
        <taxon>Ruminantia</taxon>
        <taxon>Pecora</taxon>
        <taxon>Bovidae</taxon>
        <taxon>Bovinae</taxon>
        <taxon>Bos</taxon>
    </lineage>
</organism>